<protein>
    <recommendedName>
        <fullName evidence="1">Methionine import ATP-binding protein MetN 1</fullName>
        <ecNumber evidence="1">7.4.2.11</ecNumber>
    </recommendedName>
</protein>
<feature type="chain" id="PRO_0000270235" description="Methionine import ATP-binding protein MetN 1">
    <location>
        <begin position="1"/>
        <end position="346"/>
    </location>
</feature>
<feature type="domain" description="ABC transporter" evidence="1">
    <location>
        <begin position="2"/>
        <end position="241"/>
    </location>
</feature>
<feature type="binding site" evidence="1">
    <location>
        <begin position="38"/>
        <end position="45"/>
    </location>
    <ligand>
        <name>ATP</name>
        <dbReference type="ChEBI" id="CHEBI:30616"/>
    </ligand>
</feature>
<dbReference type="EC" id="7.4.2.11" evidence="1"/>
<dbReference type="EMBL" id="AE016877">
    <property type="protein sequence ID" value="AAP07266.1"/>
    <property type="molecule type" value="Genomic_DNA"/>
</dbReference>
<dbReference type="RefSeq" id="NP_830065.1">
    <property type="nucleotide sequence ID" value="NC_004722.1"/>
</dbReference>
<dbReference type="RefSeq" id="WP_000571370.1">
    <property type="nucleotide sequence ID" value="NC_004722.1"/>
</dbReference>
<dbReference type="SMR" id="Q81IZ6"/>
<dbReference type="STRING" id="226900.BC_0197"/>
<dbReference type="KEGG" id="bce:BC0197"/>
<dbReference type="PATRIC" id="fig|226900.8.peg.188"/>
<dbReference type="HOGENOM" id="CLU_000604_1_3_9"/>
<dbReference type="OrthoDB" id="9802264at2"/>
<dbReference type="Proteomes" id="UP000001417">
    <property type="component" value="Chromosome"/>
</dbReference>
<dbReference type="GO" id="GO:0005886">
    <property type="term" value="C:plasma membrane"/>
    <property type="evidence" value="ECO:0007669"/>
    <property type="project" value="UniProtKB-SubCell"/>
</dbReference>
<dbReference type="GO" id="GO:0033232">
    <property type="term" value="F:ABC-type D-methionine transporter activity"/>
    <property type="evidence" value="ECO:0007669"/>
    <property type="project" value="UniProtKB-EC"/>
</dbReference>
<dbReference type="GO" id="GO:0005524">
    <property type="term" value="F:ATP binding"/>
    <property type="evidence" value="ECO:0007669"/>
    <property type="project" value="UniProtKB-KW"/>
</dbReference>
<dbReference type="GO" id="GO:0016887">
    <property type="term" value="F:ATP hydrolysis activity"/>
    <property type="evidence" value="ECO:0007669"/>
    <property type="project" value="InterPro"/>
</dbReference>
<dbReference type="CDD" id="cd03258">
    <property type="entry name" value="ABC_MetN_methionine_transporter"/>
    <property type="match status" value="1"/>
</dbReference>
<dbReference type="FunFam" id="3.40.50.300:FF:000233">
    <property type="entry name" value="Methionine import ATP-binding protein MetN"/>
    <property type="match status" value="1"/>
</dbReference>
<dbReference type="Gene3D" id="3.30.70.260">
    <property type="match status" value="1"/>
</dbReference>
<dbReference type="Gene3D" id="3.40.50.300">
    <property type="entry name" value="P-loop containing nucleotide triphosphate hydrolases"/>
    <property type="match status" value="1"/>
</dbReference>
<dbReference type="InterPro" id="IPR003593">
    <property type="entry name" value="AAA+_ATPase"/>
</dbReference>
<dbReference type="InterPro" id="IPR003439">
    <property type="entry name" value="ABC_transporter-like_ATP-bd"/>
</dbReference>
<dbReference type="InterPro" id="IPR017871">
    <property type="entry name" value="ABC_transporter-like_CS"/>
</dbReference>
<dbReference type="InterPro" id="IPR045865">
    <property type="entry name" value="ACT-like_dom_sf"/>
</dbReference>
<dbReference type="InterPro" id="IPR041701">
    <property type="entry name" value="MetN_ABC"/>
</dbReference>
<dbReference type="InterPro" id="IPR050086">
    <property type="entry name" value="MetN_ABC_transporter-like"/>
</dbReference>
<dbReference type="InterPro" id="IPR018449">
    <property type="entry name" value="NIL_domain"/>
</dbReference>
<dbReference type="InterPro" id="IPR027417">
    <property type="entry name" value="P-loop_NTPase"/>
</dbReference>
<dbReference type="PANTHER" id="PTHR43166">
    <property type="entry name" value="AMINO ACID IMPORT ATP-BINDING PROTEIN"/>
    <property type="match status" value="1"/>
</dbReference>
<dbReference type="PANTHER" id="PTHR43166:SF30">
    <property type="entry name" value="METHIONINE IMPORT ATP-BINDING PROTEIN METN"/>
    <property type="match status" value="1"/>
</dbReference>
<dbReference type="Pfam" id="PF00005">
    <property type="entry name" value="ABC_tran"/>
    <property type="match status" value="1"/>
</dbReference>
<dbReference type="Pfam" id="PF09383">
    <property type="entry name" value="NIL"/>
    <property type="match status" value="1"/>
</dbReference>
<dbReference type="SMART" id="SM00382">
    <property type="entry name" value="AAA"/>
    <property type="match status" value="1"/>
</dbReference>
<dbReference type="SMART" id="SM00930">
    <property type="entry name" value="NIL"/>
    <property type="match status" value="1"/>
</dbReference>
<dbReference type="SUPFAM" id="SSF55021">
    <property type="entry name" value="ACT-like"/>
    <property type="match status" value="1"/>
</dbReference>
<dbReference type="SUPFAM" id="SSF52540">
    <property type="entry name" value="P-loop containing nucleoside triphosphate hydrolases"/>
    <property type="match status" value="1"/>
</dbReference>
<dbReference type="PROSITE" id="PS00211">
    <property type="entry name" value="ABC_TRANSPORTER_1"/>
    <property type="match status" value="1"/>
</dbReference>
<dbReference type="PROSITE" id="PS50893">
    <property type="entry name" value="ABC_TRANSPORTER_2"/>
    <property type="match status" value="1"/>
</dbReference>
<dbReference type="PROSITE" id="PS51264">
    <property type="entry name" value="METN"/>
    <property type="match status" value="1"/>
</dbReference>
<proteinExistence type="inferred from homology"/>
<reference key="1">
    <citation type="journal article" date="2003" name="Nature">
        <title>Genome sequence of Bacillus cereus and comparative analysis with Bacillus anthracis.</title>
        <authorList>
            <person name="Ivanova N."/>
            <person name="Sorokin A."/>
            <person name="Anderson I."/>
            <person name="Galleron N."/>
            <person name="Candelon B."/>
            <person name="Kapatral V."/>
            <person name="Bhattacharyya A."/>
            <person name="Reznik G."/>
            <person name="Mikhailova N."/>
            <person name="Lapidus A."/>
            <person name="Chu L."/>
            <person name="Mazur M."/>
            <person name="Goltsman E."/>
            <person name="Larsen N."/>
            <person name="D'Souza M."/>
            <person name="Walunas T."/>
            <person name="Grechkin Y."/>
            <person name="Pusch G."/>
            <person name="Haselkorn R."/>
            <person name="Fonstein M."/>
            <person name="Ehrlich S.D."/>
            <person name="Overbeek R."/>
            <person name="Kyrpides N.C."/>
        </authorList>
    </citation>
    <scope>NUCLEOTIDE SEQUENCE [LARGE SCALE GENOMIC DNA]</scope>
    <source>
        <strain>ATCC 14579 / DSM 31 / CCUG 7414 / JCM 2152 / NBRC 15305 / NCIMB 9373 / NCTC 2599 / NRRL B-3711</strain>
    </source>
</reference>
<gene>
    <name evidence="1" type="primary">metN1</name>
    <name type="ordered locus">BC_0197</name>
</gene>
<accession>Q81IZ6</accession>
<evidence type="ECO:0000255" key="1">
    <source>
        <dbReference type="HAMAP-Rule" id="MF_01719"/>
    </source>
</evidence>
<sequence>MIELKNVSKVFTTKKVNVEALKSTSLQVKKGEVFGIIGYSGAGKSTLIRCVNLLEKPTTGNIIVNNQDLTTLSAKELAKARQKIGMIFQGFNLLKTVTVYENIALPLRLAGIPKTEIEKRVEKYLRIVDLFNRKDAYPSELSGGQKQRVAIARALSHEPEVLLSDEATSALDPETTDSILDLLLKINEEIGITILLITHEMNVIQRICDRVAVMEHGAVIESGTVKEIFTNPQHVTTKKFVNSAFAAKIPAEVQKELQRTGEIVTLSFIGNSSGEPALAIATKRFQVYPNILSGNITQLKHEAYGKLVIHMQGEQNEINHALSFLQEQGIIVEGGRTDYGKQVLFG</sequence>
<name>METN1_BACCR</name>
<keyword id="KW-0029">Amino-acid transport</keyword>
<keyword id="KW-0067">ATP-binding</keyword>
<keyword id="KW-1003">Cell membrane</keyword>
<keyword id="KW-0472">Membrane</keyword>
<keyword id="KW-0547">Nucleotide-binding</keyword>
<keyword id="KW-1185">Reference proteome</keyword>
<keyword id="KW-1278">Translocase</keyword>
<keyword id="KW-0813">Transport</keyword>
<comment type="function">
    <text evidence="1">Part of the ABC transporter complex MetNIQ involved in methionine import. Responsible for energy coupling to the transport system.</text>
</comment>
<comment type="catalytic activity">
    <reaction evidence="1">
        <text>L-methionine(out) + ATP + H2O = L-methionine(in) + ADP + phosphate + H(+)</text>
        <dbReference type="Rhea" id="RHEA:29779"/>
        <dbReference type="ChEBI" id="CHEBI:15377"/>
        <dbReference type="ChEBI" id="CHEBI:15378"/>
        <dbReference type="ChEBI" id="CHEBI:30616"/>
        <dbReference type="ChEBI" id="CHEBI:43474"/>
        <dbReference type="ChEBI" id="CHEBI:57844"/>
        <dbReference type="ChEBI" id="CHEBI:456216"/>
        <dbReference type="EC" id="7.4.2.11"/>
    </reaction>
</comment>
<comment type="catalytic activity">
    <reaction evidence="1">
        <text>D-methionine(out) + ATP + H2O = D-methionine(in) + ADP + phosphate + H(+)</text>
        <dbReference type="Rhea" id="RHEA:29767"/>
        <dbReference type="ChEBI" id="CHEBI:15377"/>
        <dbReference type="ChEBI" id="CHEBI:15378"/>
        <dbReference type="ChEBI" id="CHEBI:30616"/>
        <dbReference type="ChEBI" id="CHEBI:43474"/>
        <dbReference type="ChEBI" id="CHEBI:57932"/>
        <dbReference type="ChEBI" id="CHEBI:456216"/>
        <dbReference type="EC" id="7.4.2.11"/>
    </reaction>
</comment>
<comment type="subunit">
    <text evidence="1">The complex is composed of two ATP-binding proteins (MetN), two transmembrane proteins (MetI) and a solute-binding protein (MetQ).</text>
</comment>
<comment type="subcellular location">
    <subcellularLocation>
        <location evidence="1">Cell membrane</location>
        <topology evidence="1">Peripheral membrane protein</topology>
    </subcellularLocation>
</comment>
<comment type="similarity">
    <text evidence="1">Belongs to the ABC transporter superfamily. Methionine importer (TC 3.A.1.24) family.</text>
</comment>
<organism>
    <name type="scientific">Bacillus cereus (strain ATCC 14579 / DSM 31 / CCUG 7414 / JCM 2152 / NBRC 15305 / NCIMB 9373 / NCTC 2599 / NRRL B-3711)</name>
    <dbReference type="NCBI Taxonomy" id="226900"/>
    <lineage>
        <taxon>Bacteria</taxon>
        <taxon>Bacillati</taxon>
        <taxon>Bacillota</taxon>
        <taxon>Bacilli</taxon>
        <taxon>Bacillales</taxon>
        <taxon>Bacillaceae</taxon>
        <taxon>Bacillus</taxon>
        <taxon>Bacillus cereus group</taxon>
    </lineage>
</organism>